<proteinExistence type="predicted"/>
<accession>P36111</accession>
<accession>D6VX80</accession>
<feature type="chain" id="PRO_0000203196" description="Uncharacterized protein YKR015C">
    <location>
        <begin position="1"/>
        <end position="568"/>
    </location>
</feature>
<feature type="region of interest" description="Disordered" evidence="1">
    <location>
        <begin position="334"/>
        <end position="382"/>
    </location>
</feature>
<feature type="region of interest" description="Disordered" evidence="1">
    <location>
        <begin position="436"/>
        <end position="479"/>
    </location>
</feature>
<feature type="compositionally biased region" description="Basic and acidic residues" evidence="1">
    <location>
        <begin position="334"/>
        <end position="346"/>
    </location>
</feature>
<feature type="compositionally biased region" description="Low complexity" evidence="1">
    <location>
        <begin position="458"/>
        <end position="477"/>
    </location>
</feature>
<dbReference type="EMBL" id="Z28240">
    <property type="protein sequence ID" value="CAA82087.1"/>
    <property type="molecule type" value="Genomic_DNA"/>
</dbReference>
<dbReference type="EMBL" id="BK006944">
    <property type="protein sequence ID" value="DAA09170.1"/>
    <property type="molecule type" value="Genomic_DNA"/>
</dbReference>
<dbReference type="PIR" id="S38084">
    <property type="entry name" value="S38084"/>
</dbReference>
<dbReference type="RefSeq" id="NP_012940.3">
    <property type="nucleotide sequence ID" value="NM_001179805.3"/>
</dbReference>
<dbReference type="BioGRID" id="34147">
    <property type="interactions" value="67"/>
</dbReference>
<dbReference type="FunCoup" id="P36111">
    <property type="interactions" value="22"/>
</dbReference>
<dbReference type="IntAct" id="P36111">
    <property type="interactions" value="1"/>
</dbReference>
<dbReference type="MINT" id="P36111"/>
<dbReference type="STRING" id="4932.YKR015C"/>
<dbReference type="PaxDb" id="4932-YKR015C"/>
<dbReference type="EnsemblFungi" id="YKR015C_mRNA">
    <property type="protein sequence ID" value="YKR015C"/>
    <property type="gene ID" value="YKR015C"/>
</dbReference>
<dbReference type="GeneID" id="853885"/>
<dbReference type="KEGG" id="sce:YKR015C"/>
<dbReference type="AGR" id="SGD:S000001723"/>
<dbReference type="SGD" id="S000001723">
    <property type="gene designation" value="YKR015C"/>
</dbReference>
<dbReference type="VEuPathDB" id="FungiDB:YKR015C"/>
<dbReference type="HOGENOM" id="CLU_484099_0_0_1"/>
<dbReference type="InParanoid" id="P36111"/>
<dbReference type="OMA" id="MSERCAR"/>
<dbReference type="OrthoDB" id="4046384at2759"/>
<dbReference type="BioCyc" id="YEAST:G3O-31991-MONOMER"/>
<dbReference type="PRO" id="PR:P36111"/>
<dbReference type="Proteomes" id="UP000002311">
    <property type="component" value="Chromosome XI"/>
</dbReference>
<dbReference type="RNAct" id="P36111">
    <property type="molecule type" value="protein"/>
</dbReference>
<name>YKZ5_YEAST</name>
<protein>
    <recommendedName>
        <fullName>Uncharacterized protein YKR015C</fullName>
    </recommendedName>
</protein>
<sequence>MFLDYSGYEALTEINSSFGKYVLLLQQFEGCRSLKDRLQMLKDLGREFMIFENLNVEDFRESKNMIHRFYTMVISLRQIMEIGPLVRRSPAVLVVEFDCPVEDCLDELDPLHPLNRAFIFIHKQWTYYHQYYIVEKVKKVILDMAPVKEDDWSILHKVVYSEGFVERRYKKKKYLGDIYIPQPLMKSNKITTISNFSQLTKISNVRVYRFNATAACDPQNLNKKNLSIKELKDKDLPNLIWTLEPEKFYVDMRPYKEHEERKKRREEEAKVRMQGEEQENIMIERKKMDSIEVEASSGLKNIIKTPLANRVVNTFNNCAAVVIGYVTEVDKVKDDNEEKNNDRPKIANDGIAQKSRSESEDNAGTPMENAYFQPEPQDNDQNNISWNTTMKDIDPIYMSERCARVWRKEQQMLGLEKAQTFEKKYCKDQMVMDENQVEEPGKHSERHTKNQVVRPRTKIASSASKNDNSNNKNSKSCKNCHKEEAHGLVREYLKIKLNISPHGERNQRTKDKRKCIMKYNASSNNINKMPGESEVLGSTILTDIHFKDVVTVKFRDFKAKFRKVKINA</sequence>
<evidence type="ECO:0000256" key="1">
    <source>
        <dbReference type="SAM" id="MobiDB-lite"/>
    </source>
</evidence>
<evidence type="ECO:0000305" key="2"/>
<reference key="1">
    <citation type="journal article" date="1994" name="Nature">
        <title>Complete DNA sequence of yeast chromosome XI.</title>
        <authorList>
            <person name="Dujon B."/>
            <person name="Alexandraki D."/>
            <person name="Andre B."/>
            <person name="Ansorge W."/>
            <person name="Baladron V."/>
            <person name="Ballesta J.P.G."/>
            <person name="Banrevi A."/>
            <person name="Bolle P.-A."/>
            <person name="Bolotin-Fukuhara M."/>
            <person name="Bossier P."/>
            <person name="Bou G."/>
            <person name="Boyer J."/>
            <person name="Buitrago M.J."/>
            <person name="Cheret G."/>
            <person name="Colleaux L."/>
            <person name="Daignan-Fornier B."/>
            <person name="del Rey F."/>
            <person name="Dion C."/>
            <person name="Domdey H."/>
            <person name="Duesterhoeft A."/>
            <person name="Duesterhus S."/>
            <person name="Entian K.-D."/>
            <person name="Erfle H."/>
            <person name="Esteban P.F."/>
            <person name="Feldmann H."/>
            <person name="Fernandes L."/>
            <person name="Fobo G.M."/>
            <person name="Fritz C."/>
            <person name="Fukuhara H."/>
            <person name="Gabel C."/>
            <person name="Gaillon L."/>
            <person name="Garcia-Cantalejo J.M."/>
            <person name="Garcia-Ramirez J.J."/>
            <person name="Gent M.E."/>
            <person name="Ghazvini M."/>
            <person name="Goffeau A."/>
            <person name="Gonzalez A."/>
            <person name="Grothues D."/>
            <person name="Guerreiro P."/>
            <person name="Hegemann J.H."/>
            <person name="Hewitt N."/>
            <person name="Hilger F."/>
            <person name="Hollenberg C.P."/>
            <person name="Horaitis O."/>
            <person name="Indge K.J."/>
            <person name="Jacquier A."/>
            <person name="James C.M."/>
            <person name="Jauniaux J.-C."/>
            <person name="Jimenez A."/>
            <person name="Keuchel H."/>
            <person name="Kirchrath L."/>
            <person name="Kleine K."/>
            <person name="Koetter P."/>
            <person name="Legrain P."/>
            <person name="Liebl S."/>
            <person name="Louis E.J."/>
            <person name="Maia e Silva A."/>
            <person name="Marck C."/>
            <person name="Monnier A.-L."/>
            <person name="Moestl D."/>
            <person name="Mueller S."/>
            <person name="Obermaier B."/>
            <person name="Oliver S.G."/>
            <person name="Pallier C."/>
            <person name="Pascolo S."/>
            <person name="Pfeiffer F."/>
            <person name="Philippsen P."/>
            <person name="Planta R.J."/>
            <person name="Pohl F.M."/>
            <person name="Pohl T.M."/>
            <person name="Poehlmann R."/>
            <person name="Portetelle D."/>
            <person name="Purnelle B."/>
            <person name="Puzos V."/>
            <person name="Ramezani Rad M."/>
            <person name="Rasmussen S.W."/>
            <person name="Remacha M.A."/>
            <person name="Revuelta J.L."/>
            <person name="Richard G.-F."/>
            <person name="Rieger M."/>
            <person name="Rodrigues-Pousada C."/>
            <person name="Rose M."/>
            <person name="Rupp T."/>
            <person name="Santos M.A."/>
            <person name="Schwager C."/>
            <person name="Sensen C."/>
            <person name="Skala J."/>
            <person name="Soares H."/>
            <person name="Sor F."/>
            <person name="Stegemann J."/>
            <person name="Tettelin H."/>
            <person name="Thierry A."/>
            <person name="Tzermia M."/>
            <person name="Urrestarazu L.A."/>
            <person name="van Dyck L."/>
            <person name="van Vliet-Reedijk J.C."/>
            <person name="Valens M."/>
            <person name="Vandenbol M."/>
            <person name="Vilela C."/>
            <person name="Vissers S."/>
            <person name="von Wettstein D."/>
            <person name="Voss H."/>
            <person name="Wiemann S."/>
            <person name="Xu G."/>
            <person name="Zimmermann J."/>
            <person name="Haasemann M."/>
            <person name="Becker I."/>
            <person name="Mewes H.-W."/>
        </authorList>
    </citation>
    <scope>NUCLEOTIDE SEQUENCE [LARGE SCALE GENOMIC DNA]</scope>
    <source>
        <strain>ATCC 204508 / S288c</strain>
    </source>
</reference>
<reference key="2">
    <citation type="journal article" date="2014" name="G3 (Bethesda)">
        <title>The reference genome sequence of Saccharomyces cerevisiae: Then and now.</title>
        <authorList>
            <person name="Engel S.R."/>
            <person name="Dietrich F.S."/>
            <person name="Fisk D.G."/>
            <person name="Binkley G."/>
            <person name="Balakrishnan R."/>
            <person name="Costanzo M.C."/>
            <person name="Dwight S.S."/>
            <person name="Hitz B.C."/>
            <person name="Karra K."/>
            <person name="Nash R.S."/>
            <person name="Weng S."/>
            <person name="Wong E.D."/>
            <person name="Lloyd P."/>
            <person name="Skrzypek M.S."/>
            <person name="Miyasato S.R."/>
            <person name="Simison M."/>
            <person name="Cherry J.M."/>
        </authorList>
    </citation>
    <scope>GENOME REANNOTATION</scope>
    <source>
        <strain>ATCC 204508 / S288c</strain>
    </source>
</reference>
<comment type="similarity">
    <text evidence="2">To yeast YJL043w.</text>
</comment>
<organism>
    <name type="scientific">Saccharomyces cerevisiae (strain ATCC 204508 / S288c)</name>
    <name type="common">Baker's yeast</name>
    <dbReference type="NCBI Taxonomy" id="559292"/>
    <lineage>
        <taxon>Eukaryota</taxon>
        <taxon>Fungi</taxon>
        <taxon>Dikarya</taxon>
        <taxon>Ascomycota</taxon>
        <taxon>Saccharomycotina</taxon>
        <taxon>Saccharomycetes</taxon>
        <taxon>Saccharomycetales</taxon>
        <taxon>Saccharomycetaceae</taxon>
        <taxon>Saccharomyces</taxon>
    </lineage>
</organism>
<gene>
    <name type="ordered locus">YKR015C</name>
</gene>
<keyword id="KW-1185">Reference proteome</keyword>